<gene>
    <name evidence="8" type="primary">FYPP3</name>
    <name evidence="9" type="synonym">EMB2736</name>
    <name evidence="9" type="synonym">STPP</name>
    <name type="ordered locus">At3g19980</name>
    <name type="ORF">MZE19.3</name>
</gene>
<reference key="1">
    <citation type="journal article" date="2002" name="Plant Cell">
        <title>A phytochrome-associated protein phosphatase 2A modulates light signals in flowering time control in Arabidopsis.</title>
        <authorList>
            <person name="Kim D.-H."/>
            <person name="Kang J.-G."/>
            <person name="Yang S.-S."/>
            <person name="Chung K.-S."/>
            <person name="Song P.-S."/>
            <person name="Park C.-M."/>
        </authorList>
    </citation>
    <scope>NUCLEOTIDE SEQUENCE [MRNA]</scope>
    <scope>FUNCTION</scope>
    <scope>SUBCELLULAR LOCATION</scope>
    <scope>TISSUE SPECIFICITY</scope>
    <scope>INTERACTION WITH PHYA AND PHYB</scope>
    <scope>DISRUPTION PHENOTYPE</scope>
</reference>
<reference key="2">
    <citation type="journal article" date="2000" name="DNA Res.">
        <title>Structural analysis of Arabidopsis thaliana chromosome 3. II. Sequence features of the 4,251,695 bp regions covered by 90 P1, TAC and BAC clones.</title>
        <authorList>
            <person name="Kaneko T."/>
            <person name="Katoh T."/>
            <person name="Sato S."/>
            <person name="Nakamura Y."/>
            <person name="Asamizu E."/>
            <person name="Tabata S."/>
        </authorList>
    </citation>
    <scope>NUCLEOTIDE SEQUENCE [LARGE SCALE GENOMIC DNA]</scope>
    <source>
        <strain>cv. Columbia</strain>
    </source>
</reference>
<reference key="3">
    <citation type="journal article" date="2017" name="Plant J.">
        <title>Araport11: a complete reannotation of the Arabidopsis thaliana reference genome.</title>
        <authorList>
            <person name="Cheng C.Y."/>
            <person name="Krishnakumar V."/>
            <person name="Chan A.P."/>
            <person name="Thibaud-Nissen F."/>
            <person name="Schobel S."/>
            <person name="Town C.D."/>
        </authorList>
    </citation>
    <scope>GENOME REANNOTATION</scope>
    <source>
        <strain>cv. Columbia</strain>
    </source>
</reference>
<reference key="4">
    <citation type="journal article" date="2003" name="Science">
        <title>Empirical analysis of transcriptional activity in the Arabidopsis genome.</title>
        <authorList>
            <person name="Yamada K."/>
            <person name="Lim J."/>
            <person name="Dale J.M."/>
            <person name="Chen H."/>
            <person name="Shinn P."/>
            <person name="Palm C.J."/>
            <person name="Southwick A.M."/>
            <person name="Wu H.C."/>
            <person name="Kim C.J."/>
            <person name="Nguyen M."/>
            <person name="Pham P.K."/>
            <person name="Cheuk R.F."/>
            <person name="Karlin-Newmann G."/>
            <person name="Liu S.X."/>
            <person name="Lam B."/>
            <person name="Sakano H."/>
            <person name="Wu T."/>
            <person name="Yu G."/>
            <person name="Miranda M."/>
            <person name="Quach H.L."/>
            <person name="Tripp M."/>
            <person name="Chang C.H."/>
            <person name="Lee J.M."/>
            <person name="Toriumi M.J."/>
            <person name="Chan M.M."/>
            <person name="Tang C.C."/>
            <person name="Onodera C.S."/>
            <person name="Deng J.M."/>
            <person name="Akiyama K."/>
            <person name="Ansari Y."/>
            <person name="Arakawa T."/>
            <person name="Banh J."/>
            <person name="Banno F."/>
            <person name="Bowser L."/>
            <person name="Brooks S.Y."/>
            <person name="Carninci P."/>
            <person name="Chao Q."/>
            <person name="Choy N."/>
            <person name="Enju A."/>
            <person name="Goldsmith A.D."/>
            <person name="Gurjal M."/>
            <person name="Hansen N.F."/>
            <person name="Hayashizaki Y."/>
            <person name="Johnson-Hopson C."/>
            <person name="Hsuan V.W."/>
            <person name="Iida K."/>
            <person name="Karnes M."/>
            <person name="Khan S."/>
            <person name="Koesema E."/>
            <person name="Ishida J."/>
            <person name="Jiang P.X."/>
            <person name="Jones T."/>
            <person name="Kawai J."/>
            <person name="Kamiya A."/>
            <person name="Meyers C."/>
            <person name="Nakajima M."/>
            <person name="Narusaka M."/>
            <person name="Seki M."/>
            <person name="Sakurai T."/>
            <person name="Satou M."/>
            <person name="Tamse R."/>
            <person name="Vaysberg M."/>
            <person name="Wallender E.K."/>
            <person name="Wong C."/>
            <person name="Yamamura Y."/>
            <person name="Yuan S."/>
            <person name="Shinozaki K."/>
            <person name="Davis R.W."/>
            <person name="Theologis A."/>
            <person name="Ecker J.R."/>
        </authorList>
    </citation>
    <scope>NUCLEOTIDE SEQUENCE [LARGE SCALE MRNA]</scope>
    <source>
        <strain>cv. Columbia</strain>
    </source>
</reference>
<reference key="5">
    <citation type="journal article" date="2007" name="Trends Plant Sci.">
        <title>Arabidopsis PPP family of serine/threonine phosphatases.</title>
        <authorList>
            <person name="Farkas I."/>
            <person name="Dombradi V."/>
            <person name="Miskei M."/>
            <person name="Szabados L."/>
            <person name="Koncz C."/>
        </authorList>
    </citation>
    <scope>GENE FAMILY</scope>
    <scope>NOMENCLATURE</scope>
</reference>
<reference key="6">
    <citation type="journal article" date="2014" name="Plant Physiol.">
        <title>TAP46 plays a positive role in the ABSCISIC ACID INSENSITIVE5-regulated gene expression in Arabidopsis.</title>
        <authorList>
            <person name="Hu R."/>
            <person name="Zhu Y."/>
            <person name="Shen G."/>
            <person name="Zhang H."/>
        </authorList>
    </citation>
    <scope>INTERACTION WITH TAP46</scope>
</reference>
<reference key="7">
    <citation type="journal article" date="2012" name="Plant Cell">
        <title>A PP6-type phosphatase holoenzyme directly regulates PIN phosphorylation and auxin efflux in Arabidopsis.</title>
        <authorList>
            <person name="Dai M."/>
            <person name="Zhang C."/>
            <person name="Kania U."/>
            <person name="Chen F."/>
            <person name="Xue Q."/>
            <person name="McCray T."/>
            <person name="Li G."/>
            <person name="Qin G."/>
            <person name="Wakeley M."/>
            <person name="Terzaghi W."/>
            <person name="Wan J."/>
            <person name="Zhao Y."/>
            <person name="Xu J."/>
            <person name="Friml J."/>
            <person name="Deng X.W."/>
            <person name="Wang H."/>
        </authorList>
    </citation>
    <scope>FUNCTION</scope>
    <scope>CATALYTIC ACTIVITY</scope>
    <scope>COFACTOR</scope>
    <scope>INTERACTION WITH PIN1 AND PIN2</scope>
    <scope>SUBUNIT</scope>
    <scope>TISSUE SPECIFICITY</scope>
    <scope>DISRUPTION PHENOTYPE</scope>
    <scope>MUTAGENESIS OF ASP-81</scope>
</reference>
<reference key="8">
    <citation type="journal article" date="2013" name="Plant Cell">
        <title>The PP6 phosphatase regulates ABI5 phosphorylation and abscisic acid signaling in Arabidopsis.</title>
        <authorList>
            <person name="Dai M."/>
            <person name="Xue Q."/>
            <person name="Mccray T."/>
            <person name="Margavage K."/>
            <person name="Chen F."/>
            <person name="Lee J.H."/>
            <person name="Nezames C.D."/>
            <person name="Guo L."/>
            <person name="Terzaghi W."/>
            <person name="Wan J."/>
            <person name="Deng X.W."/>
            <person name="Wang H."/>
        </authorList>
    </citation>
    <scope>FUNCTION</scope>
    <scope>INTERACTION WITH ABI5</scope>
</reference>
<reference key="9">
    <citation type="journal article" date="2018" name="Plant Signal. Behav.">
        <title>Involvement of PP6-type protein phosphatase in hypocotyl phototropism in Arabidopsis seedlings.</title>
        <authorList>
            <person name="Haga K."/>
            <person name="Sakai T."/>
        </authorList>
    </citation>
    <scope>FUNCTION</scope>
</reference>
<reference key="10">
    <citation type="journal article" date="2019" name="Proc. Natl. Acad. Sci. U.S.A.">
        <title>Arabidopsis PP6 phosphatases dephosphorylate PIF proteins to repress photomorphogenesis.</title>
        <authorList>
            <person name="Yu X."/>
            <person name="Dong J."/>
            <person name="Deng Z."/>
            <person name="Jiang Y."/>
            <person name="Wu C."/>
            <person name="Qin X."/>
            <person name="Terzaghi W."/>
            <person name="Chen H."/>
            <person name="Dai M."/>
            <person name="Deng X.W."/>
        </authorList>
    </citation>
    <scope>FUNCTION</scope>
    <scope>INTERACTION WITH PIF3 AND PIF4</scope>
</reference>
<protein>
    <recommendedName>
        <fullName evidence="8">Phytochrome-associated serine/threonine-protein phosphatase 3</fullName>
        <shortName evidence="8">AtFyPP3</shortName>
        <ecNumber evidence="3">3.1.3.16</ecNumber>
    </recommendedName>
    <alternativeName>
        <fullName evidence="9">Protein EMBRYO DEFECTIVE 2736</fullName>
    </alternativeName>
</protein>
<accession>Q9LHE7</accession>
<name>FYPP3_ARATH</name>
<proteinExistence type="evidence at protein level"/>
<comment type="function">
    <text evidence="2 3 4 6 7 10">Catalytic subunit of protein phosphatase 6 (PP6) (Probable). Dephosphorylates phosphorylated phytochromes, with a preference toward Pfr forms (PubMed:12468726). Plays a major role in the photoperiodic control of flowering time in long days by modulating phytochrome signals in flowering time control (PubMed:12468726). Involved in the regulation of polar auxin transport in roots (PubMed:22715043). Dephosphorylates directly the auxin efflux carriers PIN1 and PIN2, thus promoting their proper polar localization in root cell plasma membrane (PubMed:22715043). Acts antagonistically with the protein kinase PID to regulate the reversible phosphorylation of PIN and polar targeting, subsequently impacting polar auxin transport and plant development (PubMed:22715043). Involved in the regulation of abscisic acid (ABA) signaling during seed germination and postgermination seedling growth (PubMed:23404889). Functions as a negative regulator of ABA signaling through direct dephosphorylation and destabilization of ABI5 protein (PubMed:23404889). Acts antagonistically with the protein kinase SRK2E/SNRK2.6 to regulate ABI5 phosphorylation and ABA responses (PubMed:23404889). Involved in the regulation of phosphorylation status in hypocotyl phototropism (PubMed:30373470). Involved in the negative regulation of photomorphogenesis by controlling the stability and transcriptional activity of PIF3 and PIF4 proteins in the dark, via the regulation of their phosphorylation status (PubMed:31527236).</text>
</comment>
<comment type="catalytic activity">
    <reaction evidence="3">
        <text>O-phospho-L-seryl-[protein] + H2O = L-seryl-[protein] + phosphate</text>
        <dbReference type="Rhea" id="RHEA:20629"/>
        <dbReference type="Rhea" id="RHEA-COMP:9863"/>
        <dbReference type="Rhea" id="RHEA-COMP:11604"/>
        <dbReference type="ChEBI" id="CHEBI:15377"/>
        <dbReference type="ChEBI" id="CHEBI:29999"/>
        <dbReference type="ChEBI" id="CHEBI:43474"/>
        <dbReference type="ChEBI" id="CHEBI:83421"/>
        <dbReference type="EC" id="3.1.3.16"/>
    </reaction>
    <physiologicalReaction direction="left-to-right" evidence="3">
        <dbReference type="Rhea" id="RHEA:20630"/>
    </physiologicalReaction>
</comment>
<comment type="catalytic activity">
    <reaction evidence="3">
        <text>O-phospho-L-threonyl-[protein] + H2O = L-threonyl-[protein] + phosphate</text>
        <dbReference type="Rhea" id="RHEA:47004"/>
        <dbReference type="Rhea" id="RHEA-COMP:11060"/>
        <dbReference type="Rhea" id="RHEA-COMP:11605"/>
        <dbReference type="ChEBI" id="CHEBI:15377"/>
        <dbReference type="ChEBI" id="CHEBI:30013"/>
        <dbReference type="ChEBI" id="CHEBI:43474"/>
        <dbReference type="ChEBI" id="CHEBI:61977"/>
        <dbReference type="EC" id="3.1.3.16"/>
    </reaction>
    <physiologicalReaction direction="left-to-right" evidence="3">
        <dbReference type="Rhea" id="RHEA:47005"/>
    </physiologicalReaction>
</comment>
<comment type="cofactor">
    <cofactor evidence="3">
        <name>Zn(2+)</name>
        <dbReference type="ChEBI" id="CHEBI:29105"/>
    </cofactor>
    <text evidence="1">Binds 2 zinc ions per subunit.</text>
</comment>
<comment type="subunit">
    <text evidence="2 3 4 5 7">Interacts with PHYA and PHYB, mostly when they are phosphorylated and in Pfr forms (PubMed:12468726). Interacts with TAP46 (PubMed:12468726, PubMed:24357600). Interacts with NRP (PubMed:24357600). Interacts with PIN1 and PIN2 (PubMed:22715043). Interacts with ABI5 (PubMed:23404889). Interacts with PIF3 and PIF4 (PubMed:31527236). Protein phosphatase 6 (PP6) holoenzyme is a heterotrimeric complex formed by the catalytic subunit FYPP, a SAPS domain-containing subunit (SAL) and a protein phosphatase 2A regulatory subunit A (PP2AA) (PubMed:22715043).</text>
</comment>
<comment type="subcellular location">
    <subcellularLocation>
        <location evidence="2">Cytoplasm</location>
    </subcellularLocation>
</comment>
<comment type="tissue specificity">
    <text evidence="2 3">Mostly expressed in flowers (PubMed:12468726). Also detected to a lower extent in stems and leaves (PubMed:12468726). Expressed in roots (PubMed:22715043).</text>
</comment>
<comment type="disruption phenotype">
    <text evidence="2 3">Early flowering (PubMed:12468726). No visible phenotype under normal growth conditions, but the double mutant plants fypp1 and fypp3 exhibit severe developmental defects in roots and leaves, and show defective gravitropism (PubMed:22715043).</text>
</comment>
<comment type="similarity">
    <text evidence="9">Belongs to the PPP phosphatase family. PP-6 (PP-V) subfamily.</text>
</comment>
<sequence>MDLDQWISKVKDGQHLSEDELQLLCEYVKEILIEESNVQPVNSPVTVCGDIHGQFHDLMKLFQTGGHVPDTNYIFMGDFVDRGYNSLEVFTILLLLKARYPANITLLRGNHESRQLTQVYGFYDECQRKYGNANAWRYCTDVFDYLTLSAIIDGTVLCVHGGLSPDVRTIDQIRLIERNCEIPHEGPFCDLMWSDPEDIETWAVSPRGAGWLFGSRVTTEFNHINKLDLVCRAHQLVQEGLKYMFQDKGLVTVWSAPNYCYRCGNVASILSFNDNMEREVKFFTETEENNQMRGPRTGVPYFL</sequence>
<dbReference type="EC" id="3.1.3.16" evidence="3"/>
<dbReference type="EMBL" id="AF275664">
    <property type="protein sequence ID" value="AAK69404.1"/>
    <property type="molecule type" value="mRNA"/>
</dbReference>
<dbReference type="EMBL" id="AP002050">
    <property type="protein sequence ID" value="BAB03163.1"/>
    <property type="molecule type" value="Genomic_DNA"/>
</dbReference>
<dbReference type="EMBL" id="CP002686">
    <property type="protein sequence ID" value="AEE76315.1"/>
    <property type="molecule type" value="Genomic_DNA"/>
</dbReference>
<dbReference type="EMBL" id="AY064136">
    <property type="protein sequence ID" value="AAL36043.1"/>
    <property type="molecule type" value="mRNA"/>
</dbReference>
<dbReference type="EMBL" id="AY097414">
    <property type="protein sequence ID" value="AAM19930.1"/>
    <property type="molecule type" value="mRNA"/>
</dbReference>
<dbReference type="RefSeq" id="NP_188632.1">
    <property type="nucleotide sequence ID" value="NM_112888.4"/>
</dbReference>
<dbReference type="SMR" id="Q9LHE7"/>
<dbReference type="BioGRID" id="6868">
    <property type="interactions" value="27"/>
</dbReference>
<dbReference type="FunCoup" id="Q9LHE7">
    <property type="interactions" value="4655"/>
</dbReference>
<dbReference type="IntAct" id="Q9LHE7">
    <property type="interactions" value="1"/>
</dbReference>
<dbReference type="STRING" id="3702.Q9LHE7"/>
<dbReference type="PaxDb" id="3702-AT3G19980.1"/>
<dbReference type="ProteomicsDB" id="230007"/>
<dbReference type="EnsemblPlants" id="AT3G19980.1">
    <property type="protein sequence ID" value="AT3G19980.1"/>
    <property type="gene ID" value="AT3G19980"/>
</dbReference>
<dbReference type="GeneID" id="821536"/>
<dbReference type="Gramene" id="AT3G19980.1">
    <property type="protein sequence ID" value="AT3G19980.1"/>
    <property type="gene ID" value="AT3G19980"/>
</dbReference>
<dbReference type="KEGG" id="ath:AT3G19980"/>
<dbReference type="Araport" id="AT3G19980"/>
<dbReference type="TAIR" id="AT3G19980">
    <property type="gene designation" value="FYPP3"/>
</dbReference>
<dbReference type="eggNOG" id="KOG0373">
    <property type="taxonomic scope" value="Eukaryota"/>
</dbReference>
<dbReference type="HOGENOM" id="CLU_004962_8_1_1"/>
<dbReference type="InParanoid" id="Q9LHE7"/>
<dbReference type="OMA" id="LCEIICD"/>
<dbReference type="OrthoDB" id="1021090at2759"/>
<dbReference type="PhylomeDB" id="Q9LHE7"/>
<dbReference type="PRO" id="PR:Q9LHE7"/>
<dbReference type="Proteomes" id="UP000006548">
    <property type="component" value="Chromosome 3"/>
</dbReference>
<dbReference type="ExpressionAtlas" id="Q9LHE7">
    <property type="expression patterns" value="baseline and differential"/>
</dbReference>
<dbReference type="GO" id="GO:0005737">
    <property type="term" value="C:cytoplasm"/>
    <property type="evidence" value="ECO:0007005"/>
    <property type="project" value="TAIR"/>
</dbReference>
<dbReference type="GO" id="GO:0005634">
    <property type="term" value="C:nucleus"/>
    <property type="evidence" value="ECO:0007005"/>
    <property type="project" value="TAIR"/>
</dbReference>
<dbReference type="GO" id="GO:0000159">
    <property type="term" value="C:protein phosphatase type 2A complex"/>
    <property type="evidence" value="ECO:0000304"/>
    <property type="project" value="TAIR"/>
</dbReference>
<dbReference type="GO" id="GO:0004674">
    <property type="term" value="F:protein serine/threonine kinase activity"/>
    <property type="evidence" value="ECO:0000250"/>
    <property type="project" value="TAIR"/>
</dbReference>
<dbReference type="GO" id="GO:0004722">
    <property type="term" value="F:protein serine/threonine phosphatase activity"/>
    <property type="evidence" value="ECO:0000314"/>
    <property type="project" value="UniProtKB"/>
</dbReference>
<dbReference type="GO" id="GO:0008270">
    <property type="term" value="F:zinc ion binding"/>
    <property type="evidence" value="ECO:0000314"/>
    <property type="project" value="UniProtKB"/>
</dbReference>
<dbReference type="GO" id="GO:0009910">
    <property type="term" value="P:negative regulation of flower development"/>
    <property type="evidence" value="ECO:0000315"/>
    <property type="project" value="TAIR"/>
</dbReference>
<dbReference type="GO" id="GO:0006470">
    <property type="term" value="P:protein dephosphorylation"/>
    <property type="evidence" value="ECO:0000314"/>
    <property type="project" value="TAIR"/>
</dbReference>
<dbReference type="CDD" id="cd07415">
    <property type="entry name" value="MPP_PP2A_PP4_PP6"/>
    <property type="match status" value="1"/>
</dbReference>
<dbReference type="FunFam" id="3.60.21.10:FF:000005">
    <property type="entry name" value="Serine/threonine-protein phosphatase"/>
    <property type="match status" value="1"/>
</dbReference>
<dbReference type="Gene3D" id="3.60.21.10">
    <property type="match status" value="1"/>
</dbReference>
<dbReference type="InterPro" id="IPR004843">
    <property type="entry name" value="Calcineurin-like_PHP_ApaH"/>
</dbReference>
<dbReference type="InterPro" id="IPR029052">
    <property type="entry name" value="Metallo-depent_PP-like"/>
</dbReference>
<dbReference type="InterPro" id="IPR047129">
    <property type="entry name" value="PPA2-like"/>
</dbReference>
<dbReference type="InterPro" id="IPR006186">
    <property type="entry name" value="Ser/Thr-sp_prot-phosphatase"/>
</dbReference>
<dbReference type="PANTHER" id="PTHR45619">
    <property type="entry name" value="SERINE/THREONINE-PROTEIN PHOSPHATASE PP2A-RELATED"/>
    <property type="match status" value="1"/>
</dbReference>
<dbReference type="Pfam" id="PF00149">
    <property type="entry name" value="Metallophos"/>
    <property type="match status" value="1"/>
</dbReference>
<dbReference type="PRINTS" id="PR00114">
    <property type="entry name" value="STPHPHTASE"/>
</dbReference>
<dbReference type="SMART" id="SM00156">
    <property type="entry name" value="PP2Ac"/>
    <property type="match status" value="1"/>
</dbReference>
<dbReference type="SUPFAM" id="SSF56300">
    <property type="entry name" value="Metallo-dependent phosphatases"/>
    <property type="match status" value="1"/>
</dbReference>
<dbReference type="PROSITE" id="PS00125">
    <property type="entry name" value="SER_THR_PHOSPHATASE"/>
    <property type="match status" value="1"/>
</dbReference>
<organism>
    <name type="scientific">Arabidopsis thaliana</name>
    <name type="common">Mouse-ear cress</name>
    <dbReference type="NCBI Taxonomy" id="3702"/>
    <lineage>
        <taxon>Eukaryota</taxon>
        <taxon>Viridiplantae</taxon>
        <taxon>Streptophyta</taxon>
        <taxon>Embryophyta</taxon>
        <taxon>Tracheophyta</taxon>
        <taxon>Spermatophyta</taxon>
        <taxon>Magnoliopsida</taxon>
        <taxon>eudicotyledons</taxon>
        <taxon>Gunneridae</taxon>
        <taxon>Pentapetalae</taxon>
        <taxon>rosids</taxon>
        <taxon>malvids</taxon>
        <taxon>Brassicales</taxon>
        <taxon>Brassicaceae</taxon>
        <taxon>Camelineae</taxon>
        <taxon>Arabidopsis</taxon>
    </lineage>
</organism>
<evidence type="ECO:0000250" key="1">
    <source>
        <dbReference type="UniProtKB" id="P36873"/>
    </source>
</evidence>
<evidence type="ECO:0000269" key="2">
    <source>
    </source>
</evidence>
<evidence type="ECO:0000269" key="3">
    <source>
    </source>
</evidence>
<evidence type="ECO:0000269" key="4">
    <source>
    </source>
</evidence>
<evidence type="ECO:0000269" key="5">
    <source>
    </source>
</evidence>
<evidence type="ECO:0000269" key="6">
    <source>
    </source>
</evidence>
<evidence type="ECO:0000269" key="7">
    <source>
    </source>
</evidence>
<evidence type="ECO:0000303" key="8">
    <source>
    </source>
</evidence>
<evidence type="ECO:0000305" key="9"/>
<evidence type="ECO:0000305" key="10">
    <source>
    </source>
</evidence>
<keyword id="KW-0963">Cytoplasm</keyword>
<keyword id="KW-0378">Hydrolase</keyword>
<keyword id="KW-0464">Manganese</keyword>
<keyword id="KW-0479">Metal-binding</keyword>
<keyword id="KW-0904">Protein phosphatase</keyword>
<keyword id="KW-1185">Reference proteome</keyword>
<keyword id="KW-0862">Zinc</keyword>
<feature type="chain" id="PRO_0000308990" description="Phytochrome-associated serine/threonine-protein phosphatase 3">
    <location>
        <begin position="1"/>
        <end position="303"/>
    </location>
</feature>
<feature type="active site" description="Proton donor" evidence="1">
    <location>
        <position position="111"/>
    </location>
</feature>
<feature type="binding site" evidence="1">
    <location>
        <position position="50"/>
    </location>
    <ligand>
        <name>Zn(2+)</name>
        <dbReference type="ChEBI" id="CHEBI:29105"/>
        <label>1</label>
    </ligand>
</feature>
<feature type="binding site" evidence="1">
    <location>
        <position position="52"/>
    </location>
    <ligand>
        <name>Zn(2+)</name>
        <dbReference type="ChEBI" id="CHEBI:29105"/>
        <label>1</label>
    </ligand>
</feature>
<feature type="binding site" evidence="1">
    <location>
        <position position="78"/>
    </location>
    <ligand>
        <name>Zn(2+)</name>
        <dbReference type="ChEBI" id="CHEBI:29105"/>
        <label>1</label>
    </ligand>
</feature>
<feature type="binding site" evidence="1">
    <location>
        <position position="78"/>
    </location>
    <ligand>
        <name>Zn(2+)</name>
        <dbReference type="ChEBI" id="CHEBI:29105"/>
        <label>2</label>
    </ligand>
</feature>
<feature type="binding site" evidence="1">
    <location>
        <position position="110"/>
    </location>
    <ligand>
        <name>Zn(2+)</name>
        <dbReference type="ChEBI" id="CHEBI:29105"/>
        <label>2</label>
    </ligand>
</feature>
<feature type="binding site" evidence="1">
    <location>
        <position position="160"/>
    </location>
    <ligand>
        <name>Zn(2+)</name>
        <dbReference type="ChEBI" id="CHEBI:29105"/>
        <label>2</label>
    </ligand>
</feature>
<feature type="binding site" evidence="1">
    <location>
        <position position="234"/>
    </location>
    <ligand>
        <name>Zn(2+)</name>
        <dbReference type="ChEBI" id="CHEBI:29105"/>
        <label>2</label>
    </ligand>
</feature>
<feature type="site" description="Required for catalytic activity" evidence="3">
    <location>
        <position position="81"/>
    </location>
</feature>
<feature type="mutagenesis site" description="Almost abolishes catalytic activity." evidence="3">
    <original>D</original>
    <variation>N</variation>
    <location>
        <position position="81"/>
    </location>
</feature>